<evidence type="ECO:0000255" key="1">
    <source>
        <dbReference type="HAMAP-Rule" id="MF_00689"/>
    </source>
</evidence>
<dbReference type="EC" id="2.3.2.29" evidence="1"/>
<dbReference type="EMBL" id="CP000872">
    <property type="protein sequence ID" value="ABX61840.1"/>
    <property type="molecule type" value="Genomic_DNA"/>
</dbReference>
<dbReference type="RefSeq" id="WP_004683553.1">
    <property type="nucleotide sequence ID" value="NC_010103.1"/>
</dbReference>
<dbReference type="SMR" id="A9MAD7"/>
<dbReference type="GeneID" id="55590472"/>
<dbReference type="KEGG" id="bcs:BCAN_A0770"/>
<dbReference type="HOGENOM" id="CLU_077607_1_0_5"/>
<dbReference type="Proteomes" id="UP000001385">
    <property type="component" value="Chromosome I"/>
</dbReference>
<dbReference type="GO" id="GO:0005737">
    <property type="term" value="C:cytoplasm"/>
    <property type="evidence" value="ECO:0007669"/>
    <property type="project" value="UniProtKB-SubCell"/>
</dbReference>
<dbReference type="GO" id="GO:0004057">
    <property type="term" value="F:arginyl-tRNA--protein transferase activity"/>
    <property type="evidence" value="ECO:0007669"/>
    <property type="project" value="InterPro"/>
</dbReference>
<dbReference type="GO" id="GO:0008914">
    <property type="term" value="F:leucyl-tRNA--protein transferase activity"/>
    <property type="evidence" value="ECO:0007669"/>
    <property type="project" value="UniProtKB-UniRule"/>
</dbReference>
<dbReference type="GO" id="GO:0071596">
    <property type="term" value="P:ubiquitin-dependent protein catabolic process via the N-end rule pathway"/>
    <property type="evidence" value="ECO:0007669"/>
    <property type="project" value="InterPro"/>
</dbReference>
<dbReference type="HAMAP" id="MF_00689">
    <property type="entry name" value="Bpt"/>
    <property type="match status" value="1"/>
</dbReference>
<dbReference type="InterPro" id="IPR016181">
    <property type="entry name" value="Acyl_CoA_acyltransferase"/>
</dbReference>
<dbReference type="InterPro" id="IPR017138">
    <property type="entry name" value="Asp_Glu_LeuTrfase"/>
</dbReference>
<dbReference type="InterPro" id="IPR030700">
    <property type="entry name" value="N-end_Aminoacyl_Trfase"/>
</dbReference>
<dbReference type="InterPro" id="IPR007472">
    <property type="entry name" value="N-end_Aminoacyl_Trfase_C"/>
</dbReference>
<dbReference type="InterPro" id="IPR007471">
    <property type="entry name" value="N-end_Aminoacyl_Trfase_N"/>
</dbReference>
<dbReference type="NCBIfam" id="NF002341">
    <property type="entry name" value="PRK01305.1-1"/>
    <property type="match status" value="1"/>
</dbReference>
<dbReference type="NCBIfam" id="NF002343">
    <property type="entry name" value="PRK01305.1-4"/>
    <property type="match status" value="1"/>
</dbReference>
<dbReference type="NCBIfam" id="NF002346">
    <property type="entry name" value="PRK01305.2-3"/>
    <property type="match status" value="1"/>
</dbReference>
<dbReference type="PANTHER" id="PTHR21367">
    <property type="entry name" value="ARGININE-TRNA-PROTEIN TRANSFERASE 1"/>
    <property type="match status" value="1"/>
</dbReference>
<dbReference type="PANTHER" id="PTHR21367:SF1">
    <property type="entry name" value="ARGINYL-TRNA--PROTEIN TRANSFERASE 1"/>
    <property type="match status" value="1"/>
</dbReference>
<dbReference type="Pfam" id="PF04377">
    <property type="entry name" value="ATE_C"/>
    <property type="match status" value="1"/>
</dbReference>
<dbReference type="Pfam" id="PF04376">
    <property type="entry name" value="ATE_N"/>
    <property type="match status" value="1"/>
</dbReference>
<dbReference type="PIRSF" id="PIRSF037208">
    <property type="entry name" value="ATE_pro_prd"/>
    <property type="match status" value="1"/>
</dbReference>
<dbReference type="SUPFAM" id="SSF55729">
    <property type="entry name" value="Acyl-CoA N-acyltransferases (Nat)"/>
    <property type="match status" value="1"/>
</dbReference>
<name>BPT_BRUC2</name>
<reference key="1">
    <citation type="submission" date="2007-10" db="EMBL/GenBank/DDBJ databases">
        <title>Brucella canis ATCC 23365 whole genome shotgun sequencing project.</title>
        <authorList>
            <person name="Setubal J.C."/>
            <person name="Bowns C."/>
            <person name="Boyle S."/>
            <person name="Crasta O.R."/>
            <person name="Czar M.J."/>
            <person name="Dharmanolla C."/>
            <person name="Gillespie J.J."/>
            <person name="Kenyon R.W."/>
            <person name="Lu J."/>
            <person name="Mane S."/>
            <person name="Mohapatra S."/>
            <person name="Nagrani S."/>
            <person name="Purkayastha A."/>
            <person name="Rajasimha H.K."/>
            <person name="Shallom J.M."/>
            <person name="Shallom S."/>
            <person name="Shukla M."/>
            <person name="Snyder E.E."/>
            <person name="Sobral B.W."/>
            <person name="Wattam A.R."/>
            <person name="Will R."/>
            <person name="Williams K."/>
            <person name="Yoo H."/>
            <person name="Bruce D."/>
            <person name="Detter C."/>
            <person name="Munk C."/>
            <person name="Brettin T.S."/>
        </authorList>
    </citation>
    <scope>NUCLEOTIDE SEQUENCE [LARGE SCALE GENOMIC DNA]</scope>
    <source>
        <strain>ATCC 23365 / NCTC 10854 / RM-666</strain>
    </source>
</reference>
<feature type="chain" id="PRO_1000083106" description="Aspartate/glutamate leucyltransferase">
    <location>
        <begin position="1"/>
        <end position="249"/>
    </location>
</feature>
<keyword id="KW-0012">Acyltransferase</keyword>
<keyword id="KW-0963">Cytoplasm</keyword>
<keyword id="KW-1185">Reference proteome</keyword>
<keyword id="KW-0808">Transferase</keyword>
<organism>
    <name type="scientific">Brucella canis (strain ATCC 23365 / NCTC 10854 / RM-666)</name>
    <dbReference type="NCBI Taxonomy" id="483179"/>
    <lineage>
        <taxon>Bacteria</taxon>
        <taxon>Pseudomonadati</taxon>
        <taxon>Pseudomonadota</taxon>
        <taxon>Alphaproteobacteria</taxon>
        <taxon>Hyphomicrobiales</taxon>
        <taxon>Brucellaceae</taxon>
        <taxon>Brucella/Ochrobactrum group</taxon>
        <taxon>Brucella</taxon>
    </lineage>
</organism>
<gene>
    <name evidence="1" type="primary">bpt</name>
    <name type="ordered locus">BCAN_A0770</name>
</gene>
<comment type="function">
    <text evidence="1">Functions in the N-end rule pathway of protein degradation where it conjugates Leu from its aminoacyl-tRNA to the N-termini of proteins containing an N-terminal aspartate or glutamate.</text>
</comment>
<comment type="catalytic activity">
    <reaction evidence="1">
        <text>N-terminal L-glutamyl-[protein] + L-leucyl-tRNA(Leu) = N-terminal L-leucyl-L-glutamyl-[protein] + tRNA(Leu) + H(+)</text>
        <dbReference type="Rhea" id="RHEA:50412"/>
        <dbReference type="Rhea" id="RHEA-COMP:9613"/>
        <dbReference type="Rhea" id="RHEA-COMP:9622"/>
        <dbReference type="Rhea" id="RHEA-COMP:12664"/>
        <dbReference type="Rhea" id="RHEA-COMP:12668"/>
        <dbReference type="ChEBI" id="CHEBI:15378"/>
        <dbReference type="ChEBI" id="CHEBI:64721"/>
        <dbReference type="ChEBI" id="CHEBI:78442"/>
        <dbReference type="ChEBI" id="CHEBI:78494"/>
        <dbReference type="ChEBI" id="CHEBI:133041"/>
        <dbReference type="EC" id="2.3.2.29"/>
    </reaction>
</comment>
<comment type="catalytic activity">
    <reaction evidence="1">
        <text>N-terminal L-aspartyl-[protein] + L-leucyl-tRNA(Leu) = N-terminal L-leucyl-L-aspartyl-[protein] + tRNA(Leu) + H(+)</text>
        <dbReference type="Rhea" id="RHEA:50420"/>
        <dbReference type="Rhea" id="RHEA-COMP:9613"/>
        <dbReference type="Rhea" id="RHEA-COMP:9622"/>
        <dbReference type="Rhea" id="RHEA-COMP:12669"/>
        <dbReference type="Rhea" id="RHEA-COMP:12674"/>
        <dbReference type="ChEBI" id="CHEBI:15378"/>
        <dbReference type="ChEBI" id="CHEBI:64720"/>
        <dbReference type="ChEBI" id="CHEBI:78442"/>
        <dbReference type="ChEBI" id="CHEBI:78494"/>
        <dbReference type="ChEBI" id="CHEBI:133042"/>
        <dbReference type="EC" id="2.3.2.29"/>
    </reaction>
</comment>
<comment type="subcellular location">
    <subcellularLocation>
        <location evidence="1">Cytoplasm</location>
    </subcellularLocation>
</comment>
<comment type="similarity">
    <text evidence="1">Belongs to the R-transferase family. Bpt subfamily.</text>
</comment>
<sequence>MTHQPQQSPQFFLTAPSPCPYLEGQQERKVFTHLVGDKANEINDLLTQGGFRRSQNIAYRPACEVCRACISVRILAGEFEMTRNMRRVWSQNRDLIGRVHKAQPSTEQYALFRDYLDARHRSGGMSDMTVLDYAMMIEDTHVNTQIIEYRRRGPDSFMSAKGDGELIAVALTDVMADGLSMVYSFFSPHMQERSLGTYMILDHIERARAAGLPHVYLGYWVEGSRKMQYKIRFTPQEHLGPRGWQRFEG</sequence>
<proteinExistence type="inferred from homology"/>
<accession>A9MAD7</accession>
<protein>
    <recommendedName>
        <fullName evidence="1">Aspartate/glutamate leucyltransferase</fullName>
        <ecNumber evidence="1">2.3.2.29</ecNumber>
    </recommendedName>
</protein>